<feature type="signal peptide" evidence="1">
    <location>
        <begin position="1"/>
        <end position="28"/>
    </location>
</feature>
<feature type="chain" id="PRO_0000317036" description="FPRL1 inhibitory protein">
    <location>
        <begin position="29"/>
        <end position="133"/>
    </location>
</feature>
<reference key="1">
    <citation type="journal article" date="2008" name="J. Bacteriol.">
        <title>Genome sequence of Staphylococcus aureus strain Newman and comparative analysis of staphylococcal genomes: polymorphism and evolution of two major pathogenicity islands.</title>
        <authorList>
            <person name="Baba T."/>
            <person name="Bae T."/>
            <person name="Schneewind O."/>
            <person name="Takeuchi F."/>
            <person name="Hiramatsu K."/>
        </authorList>
    </citation>
    <scope>NUCLEOTIDE SEQUENCE [LARGE SCALE GENOMIC DNA]</scope>
    <source>
        <strain>Newman</strain>
    </source>
</reference>
<reference key="2">
    <citation type="journal article" date="2006" name="J. Immunol.">
        <title>A new staphylococcal anti-inflammatory protein that antagonizes the formyl peptide receptor-like 1.</title>
        <authorList>
            <person name="Prat C."/>
            <person name="Bestebroer J."/>
            <person name="de Haas C.J.C."/>
            <person name="van Strijp J.A.G."/>
            <person name="van Kessel K.P.M."/>
        </authorList>
    </citation>
    <scope>FUNCTION</scope>
    <scope>INTERACTION WITH FPRL1</scope>
</reference>
<gene>
    <name type="primary">flr</name>
    <name type="ordered locus">NWMN_1067</name>
</gene>
<comment type="function">
    <text evidence="2">May be involved in countering the first line of host defense mechanisms. Impairs the leukocyte response to FPRL1 agonists by binding directly to host FPRL1. Exerts, in vitro, anti-inflammatory activity by inhibiting calcium mobilization and cell migration toward chemoattractants.</text>
</comment>
<comment type="subcellular location">
    <subcellularLocation>
        <location evidence="3">Secreted</location>
    </subcellularLocation>
</comment>
<comment type="similarity">
    <text evidence="3">Belongs to the CHIPS/FLIPr family.</text>
</comment>
<sequence length="133" mass="15261">MKKNITKTIIASTVIAAGLLTQTNDAKAFFSYEWKGLEIAKNLADQAKKDDERIDKLMKESDKNLTPYKAETVNDLYLIVKKLSQGDVKKAVVRIKDDGPRDYYTFDLTRPLEENRKNIKVVKNGEIDSITWY</sequence>
<keyword id="KW-0964">Secreted</keyword>
<keyword id="KW-0732">Signal</keyword>
<keyword id="KW-0843">Virulence</keyword>
<protein>
    <recommendedName>
        <fullName>FPRL1 inhibitory protein</fullName>
        <shortName>FLIPr</shortName>
    </recommendedName>
</protein>
<dbReference type="EMBL" id="AP009351">
    <property type="protein sequence ID" value="BAF67339.1"/>
    <property type="molecule type" value="Genomic_DNA"/>
</dbReference>
<dbReference type="RefSeq" id="WP_000739562.1">
    <property type="nucleotide sequence ID" value="NZ_JBBIAE010000001.1"/>
</dbReference>
<dbReference type="KEGG" id="sae:NWMN_1067"/>
<dbReference type="HOGENOM" id="CLU_157996_0_0_9"/>
<dbReference type="Proteomes" id="UP000006386">
    <property type="component" value="Chromosome"/>
</dbReference>
<dbReference type="GO" id="GO:0005576">
    <property type="term" value="C:extracellular region"/>
    <property type="evidence" value="ECO:0007669"/>
    <property type="project" value="UniProtKB-SubCell"/>
</dbReference>
<dbReference type="GO" id="GO:0141129">
    <property type="term" value="P:symbiont-mediated suppression of host signal transduction pathway via antagonism of host cell surface receptor"/>
    <property type="evidence" value="ECO:0000269"/>
    <property type="project" value="SigSci"/>
</dbReference>
<dbReference type="Gene3D" id="3.10.20.390">
    <property type="entry name" value="Chemotaxis-inhibiting protein CHIPS"/>
    <property type="match status" value="1"/>
</dbReference>
<dbReference type="InterPro" id="IPR023256">
    <property type="entry name" value="FLIPR"/>
</dbReference>
<dbReference type="InterPro" id="IPR038529">
    <property type="entry name" value="FLIPR/CHIP_sf"/>
</dbReference>
<dbReference type="InterPro" id="IPR023253">
    <property type="entry name" value="FLIPR/CHIPS"/>
</dbReference>
<dbReference type="NCBIfam" id="NF009592">
    <property type="entry name" value="PRK13033.1"/>
    <property type="match status" value="1"/>
</dbReference>
<dbReference type="Pfam" id="PF16104">
    <property type="entry name" value="FPRL1_inhibitor"/>
    <property type="match status" value="1"/>
</dbReference>
<dbReference type="PRINTS" id="PR02037">
    <property type="entry name" value="FLIPR"/>
</dbReference>
<dbReference type="PRINTS" id="PR02035">
    <property type="entry name" value="FLIPRCHIPS"/>
</dbReference>
<proteinExistence type="evidence at protein level"/>
<accession>A6QG57</accession>
<name>FLIPR_STAAE</name>
<organism>
    <name type="scientific">Staphylococcus aureus (strain Newman)</name>
    <dbReference type="NCBI Taxonomy" id="426430"/>
    <lineage>
        <taxon>Bacteria</taxon>
        <taxon>Bacillati</taxon>
        <taxon>Bacillota</taxon>
        <taxon>Bacilli</taxon>
        <taxon>Bacillales</taxon>
        <taxon>Staphylococcaceae</taxon>
        <taxon>Staphylococcus</taxon>
    </lineage>
</organism>
<evidence type="ECO:0000255" key="1"/>
<evidence type="ECO:0000269" key="2">
    <source>
    </source>
</evidence>
<evidence type="ECO:0000305" key="3"/>